<evidence type="ECO:0000255" key="1">
    <source>
        <dbReference type="HAMAP-Rule" id="MF_00275"/>
    </source>
</evidence>
<gene>
    <name evidence="1" type="primary">kdpA</name>
    <name type="ordered locus">ECS88_0732</name>
</gene>
<comment type="function">
    <text evidence="1">Part of the high-affinity ATP-driven potassium transport (or Kdp) system, which catalyzes the hydrolysis of ATP coupled with the electrogenic transport of potassium into the cytoplasm. This subunit binds the periplasmic potassium ions and delivers the ions to the membrane domain of KdpB through an intramembrane tunnel.</text>
</comment>
<comment type="subunit">
    <text evidence="1">The system is composed of three essential subunits: KdpA, KdpB and KdpC.</text>
</comment>
<comment type="subcellular location">
    <subcellularLocation>
        <location evidence="1">Cell inner membrane</location>
        <topology evidence="1">Multi-pass membrane protein</topology>
    </subcellularLocation>
</comment>
<comment type="similarity">
    <text evidence="1">Belongs to the KdpA family.</text>
</comment>
<reference key="1">
    <citation type="journal article" date="2009" name="PLoS Genet.">
        <title>Organised genome dynamics in the Escherichia coli species results in highly diverse adaptive paths.</title>
        <authorList>
            <person name="Touchon M."/>
            <person name="Hoede C."/>
            <person name="Tenaillon O."/>
            <person name="Barbe V."/>
            <person name="Baeriswyl S."/>
            <person name="Bidet P."/>
            <person name="Bingen E."/>
            <person name="Bonacorsi S."/>
            <person name="Bouchier C."/>
            <person name="Bouvet O."/>
            <person name="Calteau A."/>
            <person name="Chiapello H."/>
            <person name="Clermont O."/>
            <person name="Cruveiller S."/>
            <person name="Danchin A."/>
            <person name="Diard M."/>
            <person name="Dossat C."/>
            <person name="Karoui M.E."/>
            <person name="Frapy E."/>
            <person name="Garry L."/>
            <person name="Ghigo J.M."/>
            <person name="Gilles A.M."/>
            <person name="Johnson J."/>
            <person name="Le Bouguenec C."/>
            <person name="Lescat M."/>
            <person name="Mangenot S."/>
            <person name="Martinez-Jehanne V."/>
            <person name="Matic I."/>
            <person name="Nassif X."/>
            <person name="Oztas S."/>
            <person name="Petit M.A."/>
            <person name="Pichon C."/>
            <person name="Rouy Z."/>
            <person name="Ruf C.S."/>
            <person name="Schneider D."/>
            <person name="Tourret J."/>
            <person name="Vacherie B."/>
            <person name="Vallenet D."/>
            <person name="Medigue C."/>
            <person name="Rocha E.P.C."/>
            <person name="Denamur E."/>
        </authorList>
    </citation>
    <scope>NUCLEOTIDE SEQUENCE [LARGE SCALE GENOMIC DNA]</scope>
    <source>
        <strain>S88 / ExPEC</strain>
    </source>
</reference>
<organism>
    <name type="scientific">Escherichia coli O45:K1 (strain S88 / ExPEC)</name>
    <dbReference type="NCBI Taxonomy" id="585035"/>
    <lineage>
        <taxon>Bacteria</taxon>
        <taxon>Pseudomonadati</taxon>
        <taxon>Pseudomonadota</taxon>
        <taxon>Gammaproteobacteria</taxon>
        <taxon>Enterobacterales</taxon>
        <taxon>Enterobacteriaceae</taxon>
        <taxon>Escherichia</taxon>
    </lineage>
</organism>
<keyword id="KW-0997">Cell inner membrane</keyword>
<keyword id="KW-1003">Cell membrane</keyword>
<keyword id="KW-0406">Ion transport</keyword>
<keyword id="KW-0472">Membrane</keyword>
<keyword id="KW-0630">Potassium</keyword>
<keyword id="KW-0633">Potassium transport</keyword>
<keyword id="KW-1185">Reference proteome</keyword>
<keyword id="KW-0812">Transmembrane</keyword>
<keyword id="KW-1133">Transmembrane helix</keyword>
<keyword id="KW-0813">Transport</keyword>
<proteinExistence type="inferred from homology"/>
<feature type="chain" id="PRO_1000119335" description="Potassium-transporting ATPase potassium-binding subunit">
    <location>
        <begin position="1"/>
        <end position="557"/>
    </location>
</feature>
<feature type="transmembrane region" description="Helical" evidence="1">
    <location>
        <begin position="5"/>
        <end position="25"/>
    </location>
</feature>
<feature type="transmembrane region" description="Helical" evidence="1">
    <location>
        <begin position="63"/>
        <end position="83"/>
    </location>
</feature>
<feature type="transmembrane region" description="Helical" evidence="1">
    <location>
        <begin position="132"/>
        <end position="152"/>
    </location>
</feature>
<feature type="transmembrane region" description="Helical" evidence="1">
    <location>
        <begin position="170"/>
        <end position="190"/>
    </location>
</feature>
<feature type="transmembrane region" description="Helical" evidence="1">
    <location>
        <begin position="253"/>
        <end position="273"/>
    </location>
</feature>
<feature type="transmembrane region" description="Helical" evidence="1">
    <location>
        <begin position="283"/>
        <end position="303"/>
    </location>
</feature>
<feature type="transmembrane region" description="Helical" evidence="1">
    <location>
        <begin position="329"/>
        <end position="349"/>
    </location>
</feature>
<feature type="transmembrane region" description="Helical" evidence="1">
    <location>
        <begin position="356"/>
        <end position="376"/>
    </location>
</feature>
<feature type="transmembrane region" description="Helical" evidence="1">
    <location>
        <begin position="379"/>
        <end position="399"/>
    </location>
</feature>
<feature type="transmembrane region" description="Helical" evidence="1">
    <location>
        <begin position="416"/>
        <end position="436"/>
    </location>
</feature>
<feature type="transmembrane region" description="Helical" evidence="1">
    <location>
        <begin position="484"/>
        <end position="504"/>
    </location>
</feature>
<feature type="transmembrane region" description="Helical" evidence="1">
    <location>
        <begin position="526"/>
        <end position="546"/>
    </location>
</feature>
<name>KDPA_ECO45</name>
<accession>B7MFW3</accession>
<sequence>MAAQGFLLIATFLLVFMVLARPLGSGLARLINDIPLPGTTGVERVLFSALGVSDREMNWKQYLSAILGLNILGLAVLFFMLLGQHYLPLNPQQLPGLSWDLALNTAVSFVTNTNWQSYSGETTLSYFSQMAGLTVQNFLSAASGIAVIFALIRAFTRQSMNTLGNAWVDLLRITLWVLTPVALLIALFFIQQGALQNFLPYQAVTTIEGAQQLLPMGPVASQEAIKMLGTNGGGFFNANSSHPFENPTALTNFVQMLAIFLIPTALCFAFGEVAGDRRQGRMLLWAMSVIFVICVGVVMWAEVQGNPHLLALGADSSINMEGKESRFGVLVSSLFAVVTTAASCGAVIAMHDSFTALGGMVPMWLMQIGEVVFGGVGSGLYGMMLFVLLAVFIAGLMIGRTPEYLGKKIDVREMKLTALAILVTPTLVLMGAALAMMTDAGRSAMLNPGPHGFSEVLYAVSSAANNNGSAFAGLSANSPFWNCLLALCMFVGRFGVIIPVMAIAGSLVSKKSQPASSGTLPTHGPLFVGLLIGTVLLVGALTFIPALALGPVAEYLS</sequence>
<protein>
    <recommendedName>
        <fullName evidence="1">Potassium-transporting ATPase potassium-binding subunit</fullName>
    </recommendedName>
    <alternativeName>
        <fullName evidence="1">ATP phosphohydrolase [potassium-transporting] A chain</fullName>
    </alternativeName>
    <alternativeName>
        <fullName evidence="1">Potassium-binding and translocating subunit A</fullName>
    </alternativeName>
    <alternativeName>
        <fullName evidence="1">Potassium-translocating ATPase A chain</fullName>
    </alternativeName>
</protein>
<dbReference type="EMBL" id="CU928161">
    <property type="protein sequence ID" value="CAR02072.1"/>
    <property type="molecule type" value="Genomic_DNA"/>
</dbReference>
<dbReference type="RefSeq" id="WP_000730081.1">
    <property type="nucleotide sequence ID" value="NC_011742.1"/>
</dbReference>
<dbReference type="SMR" id="B7MFW3"/>
<dbReference type="KEGG" id="ecz:ECS88_0732"/>
<dbReference type="HOGENOM" id="CLU_018614_3_0_6"/>
<dbReference type="Proteomes" id="UP000000747">
    <property type="component" value="Chromosome"/>
</dbReference>
<dbReference type="GO" id="GO:0005886">
    <property type="term" value="C:plasma membrane"/>
    <property type="evidence" value="ECO:0007669"/>
    <property type="project" value="UniProtKB-SubCell"/>
</dbReference>
<dbReference type="GO" id="GO:0008556">
    <property type="term" value="F:P-type potassium transmembrane transporter activity"/>
    <property type="evidence" value="ECO:0007669"/>
    <property type="project" value="InterPro"/>
</dbReference>
<dbReference type="GO" id="GO:0030955">
    <property type="term" value="F:potassium ion binding"/>
    <property type="evidence" value="ECO:0007669"/>
    <property type="project" value="UniProtKB-UniRule"/>
</dbReference>
<dbReference type="HAMAP" id="MF_00275">
    <property type="entry name" value="KdpA"/>
    <property type="match status" value="1"/>
</dbReference>
<dbReference type="InterPro" id="IPR004623">
    <property type="entry name" value="KdpA"/>
</dbReference>
<dbReference type="NCBIfam" id="TIGR00680">
    <property type="entry name" value="kdpA"/>
    <property type="match status" value="1"/>
</dbReference>
<dbReference type="PANTHER" id="PTHR30607">
    <property type="entry name" value="POTASSIUM-TRANSPORTING ATPASE A CHAIN"/>
    <property type="match status" value="1"/>
</dbReference>
<dbReference type="PANTHER" id="PTHR30607:SF2">
    <property type="entry name" value="POTASSIUM-TRANSPORTING ATPASE POTASSIUM-BINDING SUBUNIT"/>
    <property type="match status" value="1"/>
</dbReference>
<dbReference type="Pfam" id="PF03814">
    <property type="entry name" value="KdpA"/>
    <property type="match status" value="1"/>
</dbReference>
<dbReference type="PIRSF" id="PIRSF001294">
    <property type="entry name" value="K_ATPaseA"/>
    <property type="match status" value="1"/>
</dbReference>